<accession>Q9UT32</accession>
<keyword id="KW-0002">3D-structure</keyword>
<keyword id="KW-0539">Nucleus</keyword>
<keyword id="KW-1185">Reference proteome</keyword>
<keyword id="KW-0690">Ribosome biogenesis</keyword>
<keyword id="KW-0698">rRNA processing</keyword>
<organism>
    <name type="scientific">Schizosaccharomyces pombe (strain 972 / ATCC 24843)</name>
    <name type="common">Fission yeast</name>
    <dbReference type="NCBI Taxonomy" id="284812"/>
    <lineage>
        <taxon>Eukaryota</taxon>
        <taxon>Fungi</taxon>
        <taxon>Dikarya</taxon>
        <taxon>Ascomycota</taxon>
        <taxon>Taphrinomycotina</taxon>
        <taxon>Schizosaccharomycetes</taxon>
        <taxon>Schizosaccharomycetales</taxon>
        <taxon>Schizosaccharomycetaceae</taxon>
        <taxon>Schizosaccharomyces</taxon>
    </lineage>
</organism>
<feature type="chain" id="PRO_0000353842" description="Putative ribosome biogenesis protein C8F11.04">
    <location>
        <begin position="1"/>
        <end position="373"/>
    </location>
</feature>
<feature type="region of interest" description="Disordered" evidence="2">
    <location>
        <begin position="265"/>
        <end position="373"/>
    </location>
</feature>
<feature type="compositionally biased region" description="Basic and acidic residues" evidence="2">
    <location>
        <begin position="292"/>
        <end position="320"/>
    </location>
</feature>
<feature type="compositionally biased region" description="Polar residues" evidence="2">
    <location>
        <begin position="347"/>
        <end position="359"/>
    </location>
</feature>
<feature type="compositionally biased region" description="Basic residues" evidence="2">
    <location>
        <begin position="362"/>
        <end position="373"/>
    </location>
</feature>
<feature type="turn" evidence="6">
    <location>
        <begin position="6"/>
        <end position="8"/>
    </location>
</feature>
<feature type="helix" evidence="6">
    <location>
        <begin position="15"/>
        <end position="26"/>
    </location>
</feature>
<feature type="helix" evidence="5">
    <location>
        <begin position="43"/>
        <end position="45"/>
    </location>
</feature>
<feature type="strand" evidence="6">
    <location>
        <begin position="52"/>
        <end position="61"/>
    </location>
</feature>
<feature type="strand" evidence="6">
    <location>
        <begin position="72"/>
        <end position="75"/>
    </location>
</feature>
<feature type="strand" evidence="6">
    <location>
        <begin position="87"/>
        <end position="91"/>
    </location>
</feature>
<feature type="helix" evidence="6">
    <location>
        <begin position="95"/>
        <end position="105"/>
    </location>
</feature>
<feature type="helix" evidence="6">
    <location>
        <begin position="107"/>
        <end position="109"/>
    </location>
</feature>
<feature type="strand" evidence="6">
    <location>
        <begin position="111"/>
        <end position="116"/>
    </location>
</feature>
<feature type="helix" evidence="6">
    <location>
        <begin position="117"/>
        <end position="123"/>
    </location>
</feature>
<feature type="helix" evidence="6">
    <location>
        <begin position="127"/>
        <end position="135"/>
    </location>
</feature>
<feature type="strand" evidence="6">
    <location>
        <begin position="138"/>
        <end position="144"/>
    </location>
</feature>
<feature type="turn" evidence="6">
    <location>
        <begin position="145"/>
        <end position="154"/>
    </location>
</feature>
<feature type="helix" evidence="6">
    <location>
        <begin position="155"/>
        <end position="159"/>
    </location>
</feature>
<feature type="turn" evidence="6">
    <location>
        <begin position="160"/>
        <end position="162"/>
    </location>
</feature>
<feature type="strand" evidence="6">
    <location>
        <begin position="166"/>
        <end position="168"/>
    </location>
</feature>
<feature type="helix" evidence="6">
    <location>
        <begin position="175"/>
        <end position="186"/>
    </location>
</feature>
<feature type="strand" evidence="6">
    <location>
        <begin position="188"/>
        <end position="191"/>
    </location>
</feature>
<feature type="strand" evidence="6">
    <location>
        <begin position="195"/>
        <end position="205"/>
    </location>
</feature>
<feature type="helix" evidence="6">
    <location>
        <begin position="210"/>
        <end position="227"/>
    </location>
</feature>
<feature type="turn" evidence="6">
    <location>
        <begin position="230"/>
        <end position="235"/>
    </location>
</feature>
<feature type="strand" evidence="6">
    <location>
        <begin position="236"/>
        <end position="242"/>
    </location>
</feature>
<feature type="strand" evidence="6">
    <location>
        <begin position="244"/>
        <end position="246"/>
    </location>
</feature>
<feature type="strand" evidence="6">
    <location>
        <begin position="249"/>
        <end position="253"/>
    </location>
</feature>
<feature type="helix" evidence="7">
    <location>
        <begin position="257"/>
        <end position="264"/>
    </location>
</feature>
<evidence type="ECO:0000250" key="1"/>
<evidence type="ECO:0000256" key="2">
    <source>
        <dbReference type="SAM" id="MobiDB-lite"/>
    </source>
</evidence>
<evidence type="ECO:0000269" key="3">
    <source>
    </source>
</evidence>
<evidence type="ECO:0000305" key="4"/>
<evidence type="ECO:0007829" key="5">
    <source>
        <dbReference type="PDB" id="8EUP"/>
    </source>
</evidence>
<evidence type="ECO:0007829" key="6">
    <source>
        <dbReference type="PDB" id="8EUY"/>
    </source>
</evidence>
<evidence type="ECO:0007829" key="7">
    <source>
        <dbReference type="PDB" id="8EV3"/>
    </source>
</evidence>
<reference key="1">
    <citation type="journal article" date="2002" name="Nature">
        <title>The genome sequence of Schizosaccharomyces pombe.</title>
        <authorList>
            <person name="Wood V."/>
            <person name="Gwilliam R."/>
            <person name="Rajandream M.A."/>
            <person name="Lyne M.H."/>
            <person name="Lyne R."/>
            <person name="Stewart A."/>
            <person name="Sgouros J.G."/>
            <person name="Peat N."/>
            <person name="Hayles J."/>
            <person name="Baker S.G."/>
            <person name="Basham D."/>
            <person name="Bowman S."/>
            <person name="Brooks K."/>
            <person name="Brown D."/>
            <person name="Brown S."/>
            <person name="Chillingworth T."/>
            <person name="Churcher C.M."/>
            <person name="Collins M."/>
            <person name="Connor R."/>
            <person name="Cronin A."/>
            <person name="Davis P."/>
            <person name="Feltwell T."/>
            <person name="Fraser A."/>
            <person name="Gentles S."/>
            <person name="Goble A."/>
            <person name="Hamlin N."/>
            <person name="Harris D.E."/>
            <person name="Hidalgo J."/>
            <person name="Hodgson G."/>
            <person name="Holroyd S."/>
            <person name="Hornsby T."/>
            <person name="Howarth S."/>
            <person name="Huckle E.J."/>
            <person name="Hunt S."/>
            <person name="Jagels K."/>
            <person name="James K.D."/>
            <person name="Jones L."/>
            <person name="Jones M."/>
            <person name="Leather S."/>
            <person name="McDonald S."/>
            <person name="McLean J."/>
            <person name="Mooney P."/>
            <person name="Moule S."/>
            <person name="Mungall K.L."/>
            <person name="Murphy L.D."/>
            <person name="Niblett D."/>
            <person name="Odell C."/>
            <person name="Oliver K."/>
            <person name="O'Neil S."/>
            <person name="Pearson D."/>
            <person name="Quail M.A."/>
            <person name="Rabbinowitsch E."/>
            <person name="Rutherford K.M."/>
            <person name="Rutter S."/>
            <person name="Saunders D."/>
            <person name="Seeger K."/>
            <person name="Sharp S."/>
            <person name="Skelton J."/>
            <person name="Simmonds M.N."/>
            <person name="Squares R."/>
            <person name="Squares S."/>
            <person name="Stevens K."/>
            <person name="Taylor K."/>
            <person name="Taylor R.G."/>
            <person name="Tivey A."/>
            <person name="Walsh S.V."/>
            <person name="Warren T."/>
            <person name="Whitehead S."/>
            <person name="Woodward J.R."/>
            <person name="Volckaert G."/>
            <person name="Aert R."/>
            <person name="Robben J."/>
            <person name="Grymonprez B."/>
            <person name="Weltjens I."/>
            <person name="Vanstreels E."/>
            <person name="Rieger M."/>
            <person name="Schaefer M."/>
            <person name="Mueller-Auer S."/>
            <person name="Gabel C."/>
            <person name="Fuchs M."/>
            <person name="Duesterhoeft A."/>
            <person name="Fritzc C."/>
            <person name="Holzer E."/>
            <person name="Moestl D."/>
            <person name="Hilbert H."/>
            <person name="Borzym K."/>
            <person name="Langer I."/>
            <person name="Beck A."/>
            <person name="Lehrach H."/>
            <person name="Reinhardt R."/>
            <person name="Pohl T.M."/>
            <person name="Eger P."/>
            <person name="Zimmermann W."/>
            <person name="Wedler H."/>
            <person name="Wambutt R."/>
            <person name="Purnelle B."/>
            <person name="Goffeau A."/>
            <person name="Cadieu E."/>
            <person name="Dreano S."/>
            <person name="Gloux S."/>
            <person name="Lelaure V."/>
            <person name="Mottier S."/>
            <person name="Galibert F."/>
            <person name="Aves S.J."/>
            <person name="Xiang Z."/>
            <person name="Hunt C."/>
            <person name="Moore K."/>
            <person name="Hurst S.M."/>
            <person name="Lucas M."/>
            <person name="Rochet M."/>
            <person name="Gaillardin C."/>
            <person name="Tallada V.A."/>
            <person name="Garzon A."/>
            <person name="Thode G."/>
            <person name="Daga R.R."/>
            <person name="Cruzado L."/>
            <person name="Jimenez J."/>
            <person name="Sanchez M."/>
            <person name="del Rey F."/>
            <person name="Benito J."/>
            <person name="Dominguez A."/>
            <person name="Revuelta J.L."/>
            <person name="Moreno S."/>
            <person name="Armstrong J."/>
            <person name="Forsburg S.L."/>
            <person name="Cerutti L."/>
            <person name="Lowe T."/>
            <person name="McCombie W.R."/>
            <person name="Paulsen I."/>
            <person name="Potashkin J."/>
            <person name="Shpakovski G.V."/>
            <person name="Ussery D."/>
            <person name="Barrell B.G."/>
            <person name="Nurse P."/>
        </authorList>
    </citation>
    <scope>NUCLEOTIDE SEQUENCE [LARGE SCALE GENOMIC DNA]</scope>
    <source>
        <strain>972 / ATCC 24843</strain>
    </source>
</reference>
<reference key="2">
    <citation type="journal article" date="2006" name="Nat. Biotechnol.">
        <title>ORFeome cloning and global analysis of protein localization in the fission yeast Schizosaccharomyces pombe.</title>
        <authorList>
            <person name="Matsuyama A."/>
            <person name="Arai R."/>
            <person name="Yashiroda Y."/>
            <person name="Shirai A."/>
            <person name="Kamata A."/>
            <person name="Sekido S."/>
            <person name="Kobayashi Y."/>
            <person name="Hashimoto A."/>
            <person name="Hamamoto M."/>
            <person name="Hiraoka Y."/>
            <person name="Horinouchi S."/>
            <person name="Yoshida M."/>
        </authorList>
    </citation>
    <scope>SUBCELLULAR LOCATION [LARGE SCALE ANALYSIS]</scope>
</reference>
<comment type="function">
    <text evidence="1">Involved in rRNA-processing and ribosome biosynthesis.</text>
</comment>
<comment type="subunit">
    <text evidence="1">Component of the 90S pre-ribosomes.</text>
</comment>
<comment type="subcellular location">
    <subcellularLocation>
        <location evidence="3">Nucleus</location>
        <location evidence="3">Nucleolus</location>
    </subcellularLocation>
</comment>
<comment type="similarity">
    <text evidence="4">Belongs to the universal ribosomal protein uL1 family. Highly divergent.</text>
</comment>
<name>RL1DB_SCHPO</name>
<gene>
    <name type="ORF">SPAC8F11.04</name>
</gene>
<dbReference type="EMBL" id="CU329670">
    <property type="protein sequence ID" value="CAB52165.1"/>
    <property type="molecule type" value="Genomic_DNA"/>
</dbReference>
<dbReference type="PIR" id="T39179">
    <property type="entry name" value="T39179"/>
</dbReference>
<dbReference type="RefSeq" id="NP_593953.1">
    <property type="nucleotide sequence ID" value="NM_001019380.2"/>
</dbReference>
<dbReference type="PDB" id="8ESQ">
    <property type="method" value="EM"/>
    <property type="resolution" value="2.80 A"/>
    <property type="chains" value="K=1-373"/>
</dbReference>
<dbReference type="PDB" id="8ESR">
    <property type="method" value="EM"/>
    <property type="resolution" value="3.20 A"/>
    <property type="chains" value="K=1-373"/>
</dbReference>
<dbReference type="PDB" id="8ETG">
    <property type="method" value="EM"/>
    <property type="resolution" value="3.40 A"/>
    <property type="chains" value="K=1-373"/>
</dbReference>
<dbReference type="PDB" id="8ETH">
    <property type="method" value="EM"/>
    <property type="resolution" value="3.80 A"/>
    <property type="chains" value="K=1-373"/>
</dbReference>
<dbReference type="PDB" id="8ETI">
    <property type="method" value="EM"/>
    <property type="resolution" value="3.70 A"/>
    <property type="chains" value="K=1-373"/>
</dbReference>
<dbReference type="PDB" id="8EUP">
    <property type="method" value="EM"/>
    <property type="resolution" value="3.10 A"/>
    <property type="chains" value="K=1-373"/>
</dbReference>
<dbReference type="PDB" id="8EUY">
    <property type="method" value="EM"/>
    <property type="resolution" value="3.00 A"/>
    <property type="chains" value="K=1-373"/>
</dbReference>
<dbReference type="PDB" id="8EV3">
    <property type="method" value="EM"/>
    <property type="resolution" value="3.00 A"/>
    <property type="chains" value="K=1-373"/>
</dbReference>
<dbReference type="PDBsum" id="8ESQ"/>
<dbReference type="PDBsum" id="8ESR"/>
<dbReference type="PDBsum" id="8ETG"/>
<dbReference type="PDBsum" id="8ETH"/>
<dbReference type="PDBsum" id="8ETI"/>
<dbReference type="PDBsum" id="8EUP"/>
<dbReference type="PDBsum" id="8EUY"/>
<dbReference type="PDBsum" id="8EV3"/>
<dbReference type="SMR" id="Q9UT32"/>
<dbReference type="BioGRID" id="279858">
    <property type="interactions" value="8"/>
</dbReference>
<dbReference type="FunCoup" id="Q9UT32">
    <property type="interactions" value="665"/>
</dbReference>
<dbReference type="STRING" id="284812.Q9UT32"/>
<dbReference type="iPTMnet" id="Q9UT32"/>
<dbReference type="PaxDb" id="4896-SPAC8F11.04.1"/>
<dbReference type="EnsemblFungi" id="SPAC8F11.04.1">
    <property type="protein sequence ID" value="SPAC8F11.04.1:pep"/>
    <property type="gene ID" value="SPAC8F11.04"/>
</dbReference>
<dbReference type="PomBase" id="SPAC8F11.04"/>
<dbReference type="VEuPathDB" id="FungiDB:SPAC8F11.04"/>
<dbReference type="eggNOG" id="KOG1685">
    <property type="taxonomic scope" value="Eukaryota"/>
</dbReference>
<dbReference type="HOGENOM" id="CLU_058096_0_0_1"/>
<dbReference type="InParanoid" id="Q9UT32"/>
<dbReference type="OMA" id="PQRAYKN"/>
<dbReference type="PhylomeDB" id="Q9UT32"/>
<dbReference type="PRO" id="PR:Q9UT32"/>
<dbReference type="Proteomes" id="UP000002485">
    <property type="component" value="Chromosome I"/>
</dbReference>
<dbReference type="GO" id="GO:0005730">
    <property type="term" value="C:nucleolus"/>
    <property type="evidence" value="ECO:0007005"/>
    <property type="project" value="PomBase"/>
</dbReference>
<dbReference type="GO" id="GO:0030684">
    <property type="term" value="C:preribosome"/>
    <property type="evidence" value="ECO:0000314"/>
    <property type="project" value="PomBase"/>
</dbReference>
<dbReference type="GO" id="GO:0003723">
    <property type="term" value="F:RNA binding"/>
    <property type="evidence" value="ECO:0000318"/>
    <property type="project" value="GO_Central"/>
</dbReference>
<dbReference type="GO" id="GO:1902626">
    <property type="term" value="P:assembly of large subunit precursor of preribosome"/>
    <property type="evidence" value="ECO:0000269"/>
    <property type="project" value="PomBase"/>
</dbReference>
<dbReference type="GO" id="GO:0030490">
    <property type="term" value="P:maturation of SSU-rRNA"/>
    <property type="evidence" value="ECO:0000266"/>
    <property type="project" value="PomBase"/>
</dbReference>
<dbReference type="CDD" id="cd00403">
    <property type="entry name" value="Ribosomal_L1"/>
    <property type="match status" value="1"/>
</dbReference>
<dbReference type="Gene3D" id="3.40.50.790">
    <property type="match status" value="1"/>
</dbReference>
<dbReference type="InterPro" id="IPR050257">
    <property type="entry name" value="eL8/uL1-like"/>
</dbReference>
<dbReference type="InterPro" id="IPR023674">
    <property type="entry name" value="Ribosomal_uL1-like"/>
</dbReference>
<dbReference type="InterPro" id="IPR028364">
    <property type="entry name" value="Ribosomal_uL1/biogenesis"/>
</dbReference>
<dbReference type="InterPro" id="IPR016095">
    <property type="entry name" value="Ribosomal_uL1_3-a/b-sand"/>
</dbReference>
<dbReference type="PANTHER" id="PTHR23105">
    <property type="entry name" value="RIBOSOMAL PROTEIN L7AE FAMILY MEMBER"/>
    <property type="match status" value="1"/>
</dbReference>
<dbReference type="Pfam" id="PF00687">
    <property type="entry name" value="Ribosomal_L1"/>
    <property type="match status" value="1"/>
</dbReference>
<dbReference type="SUPFAM" id="SSF56808">
    <property type="entry name" value="Ribosomal protein L1"/>
    <property type="match status" value="1"/>
</dbReference>
<proteinExistence type="evidence at protein level"/>
<protein>
    <recommendedName>
        <fullName>Putative ribosome biogenesis protein C8F11.04</fullName>
    </recommendedName>
    <alternativeName>
        <fullName>U3 snoRNP-associated protein C8F11.04</fullName>
    </alternativeName>
</protein>
<sequence>MALKELLGSDAPLEKVCSALLEYESKRKSSENIDSESKKTNLLEDEQDDIEPVWLQLATLKFIGNNRKLIPYKIAIKNPVIPSSSEACLIVKDPQRVYKDLVNEAGLSKVVTRVIGLSKLKAKWNSYEQKRQLRDQFDIFLADDRVIPMLPRILGKTFYQKSKVPVPVKISKGTAEQLKREVVSAYGATYFNSAPCSSFMIKCGHVSNTSTELAENVESILQFVSKHIVPDGAKGIASIHLKTSQSIAIPLWNNPNLKELIASSRKVVTKETASSKRKSDEESLPSQKKQKKVEVAKESKDSKQQNVSDKKQVTVKEVPKKLSVKNAAKTTNRDEDSKGKKAKASPKVSQSSLKANGTTAIKKVKAGKNKVKH</sequence>